<reference key="1">
    <citation type="submission" date="2005-06" db="EMBL/GenBank/DDBJ databases">
        <title>DNA sequences of macaque genes expressed in brain or testis and its evolutionary implications.</title>
        <authorList>
            <consortium name="International consortium for macaque cDNA sequencing and analysis"/>
        </authorList>
    </citation>
    <scope>NUCLEOTIDE SEQUENCE [LARGE SCALE MRNA]</scope>
    <source>
        <tissue>Brain cortex</tissue>
    </source>
</reference>
<dbReference type="EMBL" id="AB169490">
    <property type="protein sequence ID" value="BAE01572.1"/>
    <property type="molecule type" value="mRNA"/>
</dbReference>
<dbReference type="RefSeq" id="XP_005554518.1">
    <property type="nucleotide sequence ID" value="XM_005554461.4"/>
</dbReference>
<dbReference type="RefSeq" id="XP_005554519.1">
    <property type="nucleotide sequence ID" value="XM_005554462.4"/>
</dbReference>
<dbReference type="STRING" id="9541.ENSMFAP00000023792"/>
<dbReference type="Ensembl" id="ENSMFAT00000077941.1">
    <property type="protein sequence ID" value="ENSMFAP00000051207.1"/>
    <property type="gene ID" value="ENSMFAG00000043521.2"/>
</dbReference>
<dbReference type="GeneID" id="101926099"/>
<dbReference type="KEGG" id="mcf:101926099"/>
<dbReference type="CTD" id="27065"/>
<dbReference type="VEuPathDB" id="HostDB:ENSMFAG00000043521"/>
<dbReference type="eggNOG" id="ENOG502QSAI">
    <property type="taxonomic scope" value="Eukaryota"/>
</dbReference>
<dbReference type="GeneTree" id="ENSGT00390000000483"/>
<dbReference type="OMA" id="MQGRCMP"/>
<dbReference type="OrthoDB" id="16150at314294"/>
<dbReference type="Proteomes" id="UP000233100">
    <property type="component" value="Chromosome 5"/>
</dbReference>
<dbReference type="Bgee" id="ENSMFAG00000043521">
    <property type="expression patterns" value="Expressed in cerebellum and 12 other cell types or tissues"/>
</dbReference>
<dbReference type="GO" id="GO:0030425">
    <property type="term" value="C:dendrite"/>
    <property type="evidence" value="ECO:0000250"/>
    <property type="project" value="UniProtKB"/>
</dbReference>
<dbReference type="GO" id="GO:0031901">
    <property type="term" value="C:early endosome membrane"/>
    <property type="evidence" value="ECO:0000250"/>
    <property type="project" value="UniProtKB"/>
</dbReference>
<dbReference type="GO" id="GO:0005783">
    <property type="term" value="C:endoplasmic reticulum"/>
    <property type="evidence" value="ECO:0000250"/>
    <property type="project" value="UniProtKB"/>
</dbReference>
<dbReference type="GO" id="GO:0005789">
    <property type="term" value="C:endoplasmic reticulum membrane"/>
    <property type="evidence" value="ECO:0007669"/>
    <property type="project" value="UniProtKB-SubCell"/>
</dbReference>
<dbReference type="GO" id="GO:0005768">
    <property type="term" value="C:endosome"/>
    <property type="evidence" value="ECO:0000250"/>
    <property type="project" value="UniProtKB"/>
</dbReference>
<dbReference type="GO" id="GO:0098978">
    <property type="term" value="C:glutamatergic synapse"/>
    <property type="evidence" value="ECO:0007669"/>
    <property type="project" value="Ensembl"/>
</dbReference>
<dbReference type="GO" id="GO:0032580">
    <property type="term" value="C:Golgi cisterna membrane"/>
    <property type="evidence" value="ECO:0007669"/>
    <property type="project" value="UniProtKB-SubCell"/>
</dbReference>
<dbReference type="GO" id="GO:0005770">
    <property type="term" value="C:late endosome"/>
    <property type="evidence" value="ECO:0000250"/>
    <property type="project" value="UniProtKB"/>
</dbReference>
<dbReference type="GO" id="GO:0016328">
    <property type="term" value="C:lateral plasma membrane"/>
    <property type="evidence" value="ECO:0007669"/>
    <property type="project" value="Ensembl"/>
</dbReference>
<dbReference type="GO" id="GO:0043202">
    <property type="term" value="C:lysosomal lumen"/>
    <property type="evidence" value="ECO:0007669"/>
    <property type="project" value="UniProtKB-SubCell"/>
</dbReference>
<dbReference type="GO" id="GO:0032585">
    <property type="term" value="C:multivesicular body membrane"/>
    <property type="evidence" value="ECO:0007669"/>
    <property type="project" value="UniProtKB-SubCell"/>
</dbReference>
<dbReference type="GO" id="GO:0045211">
    <property type="term" value="C:postsynaptic membrane"/>
    <property type="evidence" value="ECO:0007669"/>
    <property type="project" value="Ensembl"/>
</dbReference>
<dbReference type="GO" id="GO:0055038">
    <property type="term" value="C:recycling endosome membrane"/>
    <property type="evidence" value="ECO:0000250"/>
    <property type="project" value="UniProtKB"/>
</dbReference>
<dbReference type="GO" id="GO:0036477">
    <property type="term" value="C:somatodendritic compartment"/>
    <property type="evidence" value="ECO:0000250"/>
    <property type="project" value="UniProtKB"/>
</dbReference>
<dbReference type="GO" id="GO:0032588">
    <property type="term" value="C:trans-Golgi network membrane"/>
    <property type="evidence" value="ECO:0000250"/>
    <property type="project" value="UniProtKB"/>
</dbReference>
<dbReference type="GO" id="GO:0032051">
    <property type="term" value="F:clathrin light chain binding"/>
    <property type="evidence" value="ECO:0007669"/>
    <property type="project" value="InterPro"/>
</dbReference>
<dbReference type="GO" id="GO:0042982">
    <property type="term" value="P:amyloid precursor protein metabolic process"/>
    <property type="evidence" value="ECO:0000250"/>
    <property type="project" value="UniProtKB"/>
</dbReference>
<dbReference type="GO" id="GO:0006915">
    <property type="term" value="P:apoptotic process"/>
    <property type="evidence" value="ECO:0000250"/>
    <property type="project" value="UniProtKB"/>
</dbReference>
<dbReference type="GO" id="GO:0048268">
    <property type="term" value="P:clathrin coat assembly"/>
    <property type="evidence" value="ECO:0007669"/>
    <property type="project" value="InterPro"/>
</dbReference>
<dbReference type="GO" id="GO:0099627">
    <property type="term" value="P:neurotransmitter receptor cycle"/>
    <property type="evidence" value="ECO:0000250"/>
    <property type="project" value="UniProtKB"/>
</dbReference>
<dbReference type="GO" id="GO:0098887">
    <property type="term" value="P:neurotransmitter receptor transport, endosome to postsynaptic membrane"/>
    <property type="evidence" value="ECO:0007669"/>
    <property type="project" value="Ensembl"/>
</dbReference>
<dbReference type="GO" id="GO:0099630">
    <property type="term" value="P:postsynaptic neurotransmitter receptor cycle"/>
    <property type="evidence" value="ECO:0000250"/>
    <property type="project" value="UniProtKB"/>
</dbReference>
<dbReference type="GO" id="GO:0001881">
    <property type="term" value="P:receptor recycling"/>
    <property type="evidence" value="ECO:0000250"/>
    <property type="project" value="UniProtKB"/>
</dbReference>
<dbReference type="GO" id="GO:1900271">
    <property type="term" value="P:regulation of long-term synaptic potentiation"/>
    <property type="evidence" value="ECO:0000250"/>
    <property type="project" value="UniProtKB"/>
</dbReference>
<dbReference type="GO" id="GO:0098814">
    <property type="term" value="P:spontaneous synaptic transmission"/>
    <property type="evidence" value="ECO:0000250"/>
    <property type="project" value="UniProtKB"/>
</dbReference>
<dbReference type="GO" id="GO:0099003">
    <property type="term" value="P:vesicle-mediated transport in synapse"/>
    <property type="evidence" value="ECO:0007669"/>
    <property type="project" value="Ensembl"/>
</dbReference>
<dbReference type="InterPro" id="IPR009431">
    <property type="entry name" value="NSG"/>
</dbReference>
<dbReference type="PANTHER" id="PTHR28546:SF3">
    <property type="entry name" value="NEURONAL VESICLE TRAFFICKING-ASSOCIATED PROTEIN 1"/>
    <property type="match status" value="1"/>
</dbReference>
<dbReference type="PANTHER" id="PTHR28546">
    <property type="entry name" value="NEURONAL VESICLE TRAFFICKING-ASSOCIATED PROTEIN 2-RELATED"/>
    <property type="match status" value="1"/>
</dbReference>
<dbReference type="Pfam" id="PF06387">
    <property type="entry name" value="Calcyon"/>
    <property type="match status" value="1"/>
</dbReference>
<dbReference type="PIRSF" id="PIRSF002383">
    <property type="entry name" value="Calcyon"/>
    <property type="match status" value="1"/>
</dbReference>
<name>NSG1_MACFA</name>
<feature type="chain" id="PRO_0000253600" description="Neuronal vesicle trafficking-associated protein 1">
    <location>
        <begin position="1"/>
        <end position="185"/>
    </location>
</feature>
<feature type="topological domain" description="Cytoplasmic" evidence="1">
    <location>
        <begin position="1"/>
        <end position="82"/>
    </location>
</feature>
<feature type="transmembrane region" description="Helical; Signal-anchor for type II membrane protein" evidence="4">
    <location>
        <begin position="83"/>
        <end position="103"/>
    </location>
</feature>
<feature type="topological domain" description="Lumenal" evidence="1">
    <location>
        <begin position="104"/>
        <end position="185"/>
    </location>
</feature>
<feature type="region of interest" description="Required for GRIP1 interaction" evidence="1">
    <location>
        <begin position="129"/>
        <end position="164"/>
    </location>
</feature>
<organism>
    <name type="scientific">Macaca fascicularis</name>
    <name type="common">Crab-eating macaque</name>
    <name type="synonym">Cynomolgus monkey</name>
    <dbReference type="NCBI Taxonomy" id="9541"/>
    <lineage>
        <taxon>Eukaryota</taxon>
        <taxon>Metazoa</taxon>
        <taxon>Chordata</taxon>
        <taxon>Craniata</taxon>
        <taxon>Vertebrata</taxon>
        <taxon>Euteleostomi</taxon>
        <taxon>Mammalia</taxon>
        <taxon>Eutheria</taxon>
        <taxon>Euarchontoglires</taxon>
        <taxon>Primates</taxon>
        <taxon>Haplorrhini</taxon>
        <taxon>Catarrhini</taxon>
        <taxon>Cercopithecidae</taxon>
        <taxon>Cercopithecinae</taxon>
        <taxon>Macaca</taxon>
    </lineage>
</organism>
<accession>Q4R5Q3</accession>
<protein>
    <recommendedName>
        <fullName evidence="2">Neuronal vesicle trafficking-associated protein 1</fullName>
    </recommendedName>
    <alternativeName>
        <fullName evidence="2">Neuron-enriched endosomal protein of 21 kDa</fullName>
    </alternativeName>
    <alternativeName>
        <fullName evidence="2">Neuron-specific protein family member 1</fullName>
    </alternativeName>
</protein>
<proteinExistence type="evidence at transcript level"/>
<sequence>MVKLGNNFAEKGTKQPLLEDGFDTIPLMTPLDVNQLQFPPPDKVVVKTKTEYEPDRKKGKARPPQIAEFTVSITEGVTERFKVSVLVLFALAFLTCVVFLVVYKVYKYDRACPDGFVLKNTQCIPEGLESYYAEQDSSAREKFYTVINHYNLAKQSITRSVSPWMSVLSEEKLSEQETEAAEKSA</sequence>
<keyword id="KW-0966">Cell projection</keyword>
<keyword id="KW-0968">Cytoplasmic vesicle</keyword>
<keyword id="KW-0256">Endoplasmic reticulum</keyword>
<keyword id="KW-0967">Endosome</keyword>
<keyword id="KW-0333">Golgi apparatus</keyword>
<keyword id="KW-0458">Lysosome</keyword>
<keyword id="KW-0472">Membrane</keyword>
<keyword id="KW-1185">Reference proteome</keyword>
<keyword id="KW-0735">Signal-anchor</keyword>
<keyword id="KW-0812">Transmembrane</keyword>
<keyword id="KW-1133">Transmembrane helix</keyword>
<comment type="function">
    <text evidence="1 2 3">Plays a role in the recycling mechanism in neurons of multiple receptors, including AMPAR, APP and L1CAM and acts at the level of early endosomes to promote sorting of receptors toward a recycling pathway. Regulates sorting and recycling of GRIA2 through interaction with GRIP1 and then contributes to the regulation of synaptic transmission and plasticity by affecting the recycling and targeting of AMPA receptors to the synapse (By similarity). Is required for faithful sorting of L1CAM to axons by facilitating trafficking from somatodendritic early endosome or the recycling endosome (By similarity). In an other hand, induces apoptosis via the activation of CASP3 in response to DNA damage (By similarity).</text>
</comment>
<comment type="subunit">
    <text evidence="1 2 3">Forms a complex with GRIP1, GRIA2 and STX12 through direct interaction with GRIP1; controls the intracellular fate of AMPAR and the endosomal sorting of the GRIA2 subunit toward recycling and membrane targeting. Interacts with STX12 (By similarity). Interacts with APP; could regulate APP processing (By similarity). Interacts with FAM171A1 (By similarity).</text>
</comment>
<comment type="subcellular location">
    <subcellularLocation>
        <location evidence="1">Membrane</location>
        <topology evidence="1">Single-pass type II membrane protein</topology>
    </subcellularLocation>
    <subcellularLocation>
        <location evidence="1">Golgi apparatus</location>
        <location evidence="1">trans-Golgi network membrane</location>
    </subcellularLocation>
    <subcellularLocation>
        <location evidence="1">Endosome membrane</location>
    </subcellularLocation>
    <subcellularLocation>
        <location evidence="1">Cell projection</location>
        <location evidence="1">Dendrite</location>
    </subcellularLocation>
    <subcellularLocation>
        <location evidence="1">Early endosome membrane</location>
    </subcellularLocation>
    <subcellularLocation>
        <location evidence="1">Late endosome membrane</location>
    </subcellularLocation>
    <subcellularLocation>
        <location evidence="1">Lysosome lumen</location>
    </subcellularLocation>
    <subcellularLocation>
        <location evidence="1">Recycling endosome membrane</location>
    </subcellularLocation>
    <subcellularLocation>
        <location evidence="1">Cytoplasmic vesicle membrane</location>
    </subcellularLocation>
    <subcellularLocation>
        <location evidence="1">Golgi apparatus</location>
        <location evidence="1">Golgi stack membrane</location>
    </subcellularLocation>
    <subcellularLocation>
        <location evidence="1">Endosome</location>
        <location evidence="1">Multivesicular body membrane</location>
    </subcellularLocation>
    <subcellularLocation>
        <location evidence="2">Endoplasmic reticulum membrane</location>
    </subcellularLocation>
    <text evidence="1 2 3">Endocytosed from the cell surface, thus enters into early endosomes, trafficks to late endosomes and degradates in lysosomes (By similarity). Endoplasmic reticulum targeting is essential for apoptosis (By similarity). Found in both stationary and motile endosomes. A previous study supports a type I membrane protein topology (By similarity).</text>
</comment>
<comment type="similarity">
    <text evidence="5">Belongs to the NSG family.</text>
</comment>
<evidence type="ECO:0000250" key="1">
    <source>
        <dbReference type="UniProtKB" id="P02683"/>
    </source>
</evidence>
<evidence type="ECO:0000250" key="2">
    <source>
        <dbReference type="UniProtKB" id="P42857"/>
    </source>
</evidence>
<evidence type="ECO:0000250" key="3">
    <source>
        <dbReference type="UniProtKB" id="Q62092"/>
    </source>
</evidence>
<evidence type="ECO:0000255" key="4"/>
<evidence type="ECO:0000305" key="5"/>
<gene>
    <name evidence="2" type="primary">NSG1</name>
    <name type="ORF">QccE-10659</name>
</gene>